<keyword id="KW-0053">Apoptosis</keyword>
<keyword id="KW-0131">Cell cycle</keyword>
<keyword id="KW-0963">Cytoplasm</keyword>
<keyword id="KW-0472">Membrane</keyword>
<keyword id="KW-0539">Nucleus</keyword>
<keyword id="KW-1185">Reference proteome</keyword>
<keyword id="KW-0691">RNA editing</keyword>
<keyword id="KW-0812">Transmembrane</keyword>
<keyword id="KW-1133">Transmembrane helix</keyword>
<keyword id="KW-0043">Tumor suppressor</keyword>
<sequence>MYCLQWLLPVLLIPKPLNPALWFSHSMFMGFYLLSFLLERKPCTICALVFLAALFLICYSCWGNCFLYHCSDSPLPESAHDPGVVGT</sequence>
<dbReference type="EMBL" id="AB037891">
    <property type="protein sequence ID" value="BAA90646.1"/>
    <property type="molecule type" value="mRNA"/>
</dbReference>
<dbReference type="EMBL" id="AF303656">
    <property type="protein sequence ID" value="AAL01183.1"/>
    <property type="molecule type" value="Genomic_DNA"/>
</dbReference>
<dbReference type="EMBL" id="AK011673">
    <property type="status" value="NOT_ANNOTATED_CDS"/>
    <property type="molecule type" value="mRNA"/>
</dbReference>
<dbReference type="EMBL" id="AK018127">
    <property type="protein sequence ID" value="BAB31083.1"/>
    <property type="molecule type" value="mRNA"/>
</dbReference>
<dbReference type="EMBL" id="AK170338">
    <property type="protein sequence ID" value="BAE41728.1"/>
    <property type="molecule type" value="mRNA"/>
</dbReference>
<dbReference type="EMBL" id="AL672259">
    <property type="status" value="NOT_ANNOTATED_CDS"/>
    <property type="molecule type" value="Genomic_DNA"/>
</dbReference>
<dbReference type="EMBL" id="BC026935">
    <property type="protein sequence ID" value="AAH26935.1"/>
    <property type="molecule type" value="mRNA"/>
</dbReference>
<dbReference type="EMBL" id="BC083339">
    <property type="protein sequence ID" value="AAH83339.1"/>
    <property type="molecule type" value="mRNA"/>
</dbReference>
<dbReference type="CCDS" id="CCDS16979.1"/>
<dbReference type="RefSeq" id="NP_001342355.1">
    <property type="nucleotide sequence ID" value="NM_001355426.1"/>
</dbReference>
<dbReference type="RefSeq" id="NP_058612.3">
    <property type="nucleotide sequence ID" value="NM_016916.3"/>
</dbReference>
<dbReference type="RefSeq" id="XP_006499963.1">
    <property type="nucleotide sequence ID" value="XM_006499900.2"/>
</dbReference>
<dbReference type="FunCoup" id="P62951">
    <property type="interactions" value="2039"/>
</dbReference>
<dbReference type="STRING" id="10090.ENSMUSP00000085849"/>
<dbReference type="PaxDb" id="10090-ENSMUSP00000105154"/>
<dbReference type="Antibodypedia" id="57254">
    <property type="antibodies" value="44 antibodies from 20 providers"/>
</dbReference>
<dbReference type="DNASU" id="53619"/>
<dbReference type="Ensembl" id="ENSMUST00000088494.3">
    <property type="protein sequence ID" value="ENSMUSP00000085849.3"/>
    <property type="gene ID" value="ENSMUSG00000067787.11"/>
</dbReference>
<dbReference type="Ensembl" id="ENSMUST00000109528.9">
    <property type="protein sequence ID" value="ENSMUSP00000105154.3"/>
    <property type="gene ID" value="ENSMUSG00000067787.11"/>
</dbReference>
<dbReference type="GeneID" id="53619"/>
<dbReference type="KEGG" id="mmu:53619"/>
<dbReference type="UCSC" id="uc008npc.1">
    <property type="organism name" value="mouse"/>
</dbReference>
<dbReference type="AGR" id="MGI:1858907"/>
<dbReference type="CTD" id="10904"/>
<dbReference type="MGI" id="MGI:1858907">
    <property type="gene designation" value="Blcap"/>
</dbReference>
<dbReference type="VEuPathDB" id="HostDB:ENSMUSG00000067787"/>
<dbReference type="eggNOG" id="KOG4489">
    <property type="taxonomic scope" value="Eukaryota"/>
</dbReference>
<dbReference type="GeneTree" id="ENSGT00390000014105"/>
<dbReference type="HOGENOM" id="CLU_181908_0_0_1"/>
<dbReference type="InParanoid" id="P62951"/>
<dbReference type="OMA" id="FLLCYSC"/>
<dbReference type="OrthoDB" id="5772623at2759"/>
<dbReference type="PhylomeDB" id="P62951"/>
<dbReference type="TreeFam" id="TF313306"/>
<dbReference type="BioGRID-ORCS" id="53619">
    <property type="hits" value="5 hits in 77 CRISPR screens"/>
</dbReference>
<dbReference type="ChiTaRS" id="Blcap">
    <property type="organism name" value="mouse"/>
</dbReference>
<dbReference type="PRO" id="PR:P62951"/>
<dbReference type="Proteomes" id="UP000000589">
    <property type="component" value="Chromosome 2"/>
</dbReference>
<dbReference type="RNAct" id="P62951">
    <property type="molecule type" value="protein"/>
</dbReference>
<dbReference type="Bgee" id="ENSMUSG00000067787">
    <property type="expression patterns" value="Expressed in embryonic brain and 262 other cell types or tissues"/>
</dbReference>
<dbReference type="ExpressionAtlas" id="P62951">
    <property type="expression patterns" value="baseline and differential"/>
</dbReference>
<dbReference type="GO" id="GO:0005737">
    <property type="term" value="C:cytoplasm"/>
    <property type="evidence" value="ECO:0007669"/>
    <property type="project" value="UniProtKB-SubCell"/>
</dbReference>
<dbReference type="GO" id="GO:0016020">
    <property type="term" value="C:membrane"/>
    <property type="evidence" value="ECO:0007669"/>
    <property type="project" value="UniProtKB-SubCell"/>
</dbReference>
<dbReference type="GO" id="GO:0005634">
    <property type="term" value="C:nucleus"/>
    <property type="evidence" value="ECO:0007669"/>
    <property type="project" value="UniProtKB-SubCell"/>
</dbReference>
<dbReference type="GO" id="GO:0030262">
    <property type="term" value="P:apoptotic nuclear changes"/>
    <property type="evidence" value="ECO:0007669"/>
    <property type="project" value="Ensembl"/>
</dbReference>
<dbReference type="InterPro" id="IPR009598">
    <property type="entry name" value="BCALP"/>
</dbReference>
<dbReference type="PANTHER" id="PTHR13259">
    <property type="entry name" value="BLADDER CANCER 10 KD PROTEIN HOMOLOG"/>
    <property type="match status" value="1"/>
</dbReference>
<dbReference type="PANTHER" id="PTHR13259:SF1">
    <property type="entry name" value="BLADDER CANCER-ASSOCIATED PROTEIN"/>
    <property type="match status" value="1"/>
</dbReference>
<dbReference type="Pfam" id="PF06726">
    <property type="entry name" value="BC10"/>
    <property type="match status" value="1"/>
</dbReference>
<dbReference type="SMART" id="SM01396">
    <property type="entry name" value="BC10"/>
    <property type="match status" value="1"/>
</dbReference>
<protein>
    <recommendedName>
        <fullName evidence="5">Apoptosis inducing factor BLCAP</fullName>
    </recommendedName>
    <alternativeName>
        <fullName evidence="4">BLCAP apoptosis inducing factor</fullName>
    </alternativeName>
    <alternativeName>
        <fullName>Bladder cancer 10 kDa protein</fullName>
        <shortName>Bc10</shortName>
    </alternativeName>
    <alternativeName>
        <fullName>Bladder cancer-associated protein</fullName>
    </alternativeName>
</protein>
<organism>
    <name type="scientific">Mus musculus</name>
    <name type="common">Mouse</name>
    <dbReference type="NCBI Taxonomy" id="10090"/>
    <lineage>
        <taxon>Eukaryota</taxon>
        <taxon>Metazoa</taxon>
        <taxon>Chordata</taxon>
        <taxon>Craniata</taxon>
        <taxon>Vertebrata</taxon>
        <taxon>Euteleostomi</taxon>
        <taxon>Mammalia</taxon>
        <taxon>Eutheria</taxon>
        <taxon>Euarchontoglires</taxon>
        <taxon>Glires</taxon>
        <taxon>Rodentia</taxon>
        <taxon>Myomorpha</taxon>
        <taxon>Muroidea</taxon>
        <taxon>Muridae</taxon>
        <taxon>Murinae</taxon>
        <taxon>Mus</taxon>
        <taxon>Mus</taxon>
    </lineage>
</organism>
<reference key="1">
    <citation type="submission" date="2000-01" db="EMBL/GenBank/DDBJ databases">
        <title>Murine homolog of human BC10 protein.</title>
        <authorList>
            <person name="Hahn Y."/>
            <person name="Chung J.H."/>
        </authorList>
    </citation>
    <scope>NUCLEOTIDE SEQUENCE [MRNA]</scope>
</reference>
<reference key="2">
    <citation type="submission" date="2000-09" db="EMBL/GenBank/DDBJ databases">
        <title>Structure of the murine imprinted locus for neuronatin reveals an unusual organisation.</title>
        <authorList>
            <person name="Aparicio S.A.J.R."/>
            <person name="John R.M."/>
            <person name="Surani A.M."/>
            <person name="Hawker K."/>
        </authorList>
    </citation>
    <scope>NUCLEOTIDE SEQUENCE [GENOMIC DNA]</scope>
</reference>
<reference key="3">
    <citation type="journal article" date="2005" name="Science">
        <title>The transcriptional landscape of the mammalian genome.</title>
        <authorList>
            <person name="Carninci P."/>
            <person name="Kasukawa T."/>
            <person name="Katayama S."/>
            <person name="Gough J."/>
            <person name="Frith M.C."/>
            <person name="Maeda N."/>
            <person name="Oyama R."/>
            <person name="Ravasi T."/>
            <person name="Lenhard B."/>
            <person name="Wells C."/>
            <person name="Kodzius R."/>
            <person name="Shimokawa K."/>
            <person name="Bajic V.B."/>
            <person name="Brenner S.E."/>
            <person name="Batalov S."/>
            <person name="Forrest A.R."/>
            <person name="Zavolan M."/>
            <person name="Davis M.J."/>
            <person name="Wilming L.G."/>
            <person name="Aidinis V."/>
            <person name="Allen J.E."/>
            <person name="Ambesi-Impiombato A."/>
            <person name="Apweiler R."/>
            <person name="Aturaliya R.N."/>
            <person name="Bailey T.L."/>
            <person name="Bansal M."/>
            <person name="Baxter L."/>
            <person name="Beisel K.W."/>
            <person name="Bersano T."/>
            <person name="Bono H."/>
            <person name="Chalk A.M."/>
            <person name="Chiu K.P."/>
            <person name="Choudhary V."/>
            <person name="Christoffels A."/>
            <person name="Clutterbuck D.R."/>
            <person name="Crowe M.L."/>
            <person name="Dalla E."/>
            <person name="Dalrymple B.P."/>
            <person name="de Bono B."/>
            <person name="Della Gatta G."/>
            <person name="di Bernardo D."/>
            <person name="Down T."/>
            <person name="Engstrom P."/>
            <person name="Fagiolini M."/>
            <person name="Faulkner G."/>
            <person name="Fletcher C.F."/>
            <person name="Fukushima T."/>
            <person name="Furuno M."/>
            <person name="Futaki S."/>
            <person name="Gariboldi M."/>
            <person name="Georgii-Hemming P."/>
            <person name="Gingeras T.R."/>
            <person name="Gojobori T."/>
            <person name="Green R.E."/>
            <person name="Gustincich S."/>
            <person name="Harbers M."/>
            <person name="Hayashi Y."/>
            <person name="Hensch T.K."/>
            <person name="Hirokawa N."/>
            <person name="Hill D."/>
            <person name="Huminiecki L."/>
            <person name="Iacono M."/>
            <person name="Ikeo K."/>
            <person name="Iwama A."/>
            <person name="Ishikawa T."/>
            <person name="Jakt M."/>
            <person name="Kanapin A."/>
            <person name="Katoh M."/>
            <person name="Kawasawa Y."/>
            <person name="Kelso J."/>
            <person name="Kitamura H."/>
            <person name="Kitano H."/>
            <person name="Kollias G."/>
            <person name="Krishnan S.P."/>
            <person name="Kruger A."/>
            <person name="Kummerfeld S.K."/>
            <person name="Kurochkin I.V."/>
            <person name="Lareau L.F."/>
            <person name="Lazarevic D."/>
            <person name="Lipovich L."/>
            <person name="Liu J."/>
            <person name="Liuni S."/>
            <person name="McWilliam S."/>
            <person name="Madan Babu M."/>
            <person name="Madera M."/>
            <person name="Marchionni L."/>
            <person name="Matsuda H."/>
            <person name="Matsuzawa S."/>
            <person name="Miki H."/>
            <person name="Mignone F."/>
            <person name="Miyake S."/>
            <person name="Morris K."/>
            <person name="Mottagui-Tabar S."/>
            <person name="Mulder N."/>
            <person name="Nakano N."/>
            <person name="Nakauchi H."/>
            <person name="Ng P."/>
            <person name="Nilsson R."/>
            <person name="Nishiguchi S."/>
            <person name="Nishikawa S."/>
            <person name="Nori F."/>
            <person name="Ohara O."/>
            <person name="Okazaki Y."/>
            <person name="Orlando V."/>
            <person name="Pang K.C."/>
            <person name="Pavan W.J."/>
            <person name="Pavesi G."/>
            <person name="Pesole G."/>
            <person name="Petrovsky N."/>
            <person name="Piazza S."/>
            <person name="Reed J."/>
            <person name="Reid J.F."/>
            <person name="Ring B.Z."/>
            <person name="Ringwald M."/>
            <person name="Rost B."/>
            <person name="Ruan Y."/>
            <person name="Salzberg S.L."/>
            <person name="Sandelin A."/>
            <person name="Schneider C."/>
            <person name="Schoenbach C."/>
            <person name="Sekiguchi K."/>
            <person name="Semple C.A."/>
            <person name="Seno S."/>
            <person name="Sessa L."/>
            <person name="Sheng Y."/>
            <person name="Shibata Y."/>
            <person name="Shimada H."/>
            <person name="Shimada K."/>
            <person name="Silva D."/>
            <person name="Sinclair B."/>
            <person name="Sperling S."/>
            <person name="Stupka E."/>
            <person name="Sugiura K."/>
            <person name="Sultana R."/>
            <person name="Takenaka Y."/>
            <person name="Taki K."/>
            <person name="Tammoja K."/>
            <person name="Tan S.L."/>
            <person name="Tang S."/>
            <person name="Taylor M.S."/>
            <person name="Tegner J."/>
            <person name="Teichmann S.A."/>
            <person name="Ueda H.R."/>
            <person name="van Nimwegen E."/>
            <person name="Verardo R."/>
            <person name="Wei C.L."/>
            <person name="Yagi K."/>
            <person name="Yamanishi H."/>
            <person name="Zabarovsky E."/>
            <person name="Zhu S."/>
            <person name="Zimmer A."/>
            <person name="Hide W."/>
            <person name="Bult C."/>
            <person name="Grimmond S.M."/>
            <person name="Teasdale R.D."/>
            <person name="Liu E.T."/>
            <person name="Brusic V."/>
            <person name="Quackenbush J."/>
            <person name="Wahlestedt C."/>
            <person name="Mattick J.S."/>
            <person name="Hume D.A."/>
            <person name="Kai C."/>
            <person name="Sasaki D."/>
            <person name="Tomaru Y."/>
            <person name="Fukuda S."/>
            <person name="Kanamori-Katayama M."/>
            <person name="Suzuki M."/>
            <person name="Aoki J."/>
            <person name="Arakawa T."/>
            <person name="Iida J."/>
            <person name="Imamura K."/>
            <person name="Itoh M."/>
            <person name="Kato T."/>
            <person name="Kawaji H."/>
            <person name="Kawagashira N."/>
            <person name="Kawashima T."/>
            <person name="Kojima M."/>
            <person name="Kondo S."/>
            <person name="Konno H."/>
            <person name="Nakano K."/>
            <person name="Ninomiya N."/>
            <person name="Nishio T."/>
            <person name="Okada M."/>
            <person name="Plessy C."/>
            <person name="Shibata K."/>
            <person name="Shiraki T."/>
            <person name="Suzuki S."/>
            <person name="Tagami M."/>
            <person name="Waki K."/>
            <person name="Watahiki A."/>
            <person name="Okamura-Oho Y."/>
            <person name="Suzuki H."/>
            <person name="Kawai J."/>
            <person name="Hayashizaki Y."/>
        </authorList>
    </citation>
    <scope>NUCLEOTIDE SEQUENCE [LARGE SCALE MRNA]</scope>
    <source>
        <strain>C57BL/6J</strain>
        <strain>NOD</strain>
        <tissue>Dendritic cell</tissue>
        <tissue>Embryo</tissue>
    </source>
</reference>
<reference key="4">
    <citation type="journal article" date="2009" name="PLoS Biol.">
        <title>Lineage-specific biology revealed by a finished genome assembly of the mouse.</title>
        <authorList>
            <person name="Church D.M."/>
            <person name="Goodstadt L."/>
            <person name="Hillier L.W."/>
            <person name="Zody M.C."/>
            <person name="Goldstein S."/>
            <person name="She X."/>
            <person name="Bult C.J."/>
            <person name="Agarwala R."/>
            <person name="Cherry J.L."/>
            <person name="DiCuccio M."/>
            <person name="Hlavina W."/>
            <person name="Kapustin Y."/>
            <person name="Meric P."/>
            <person name="Maglott D."/>
            <person name="Birtle Z."/>
            <person name="Marques A.C."/>
            <person name="Graves T."/>
            <person name="Zhou S."/>
            <person name="Teague B."/>
            <person name="Potamousis K."/>
            <person name="Churas C."/>
            <person name="Place M."/>
            <person name="Herschleb J."/>
            <person name="Runnheim R."/>
            <person name="Forrest D."/>
            <person name="Amos-Landgraf J."/>
            <person name="Schwartz D.C."/>
            <person name="Cheng Z."/>
            <person name="Lindblad-Toh K."/>
            <person name="Eichler E.E."/>
            <person name="Ponting C.P."/>
        </authorList>
    </citation>
    <scope>NUCLEOTIDE SEQUENCE [LARGE SCALE GENOMIC DNA]</scope>
    <source>
        <strain>C57BL/6J</strain>
    </source>
</reference>
<reference key="5">
    <citation type="journal article" date="2004" name="Genome Res.">
        <title>The status, quality, and expansion of the NIH full-length cDNA project: the Mammalian Gene Collection (MGC).</title>
        <authorList>
            <consortium name="The MGC Project Team"/>
        </authorList>
    </citation>
    <scope>NUCLEOTIDE SEQUENCE [LARGE SCALE MRNA]</scope>
    <source>
        <strain>C57BL/6J</strain>
        <strain>FVB/N</strain>
        <tissue>Embryonic brain</tissue>
        <tissue>Mammary tumor</tissue>
    </source>
</reference>
<reference key="6">
    <citation type="journal article" date="2022" name="Front. Psychiatry">
        <title>Repeated Winning and Losing Experiences in Chronic Social Conflicts Are Linked to RNA Editing Pattern Difference.</title>
        <authorList>
            <person name="Ru F.X."/>
            <person name="Kong F."/>
            <person name="Ren C.Y."/>
            <person name="He Y.S."/>
            <person name="Xia S.Y."/>
            <person name="Li Y.N."/>
            <person name="Liang Y.P."/>
            <person name="Feng J.J."/>
            <person name="Wei Z.Y."/>
            <person name="Chen J.H."/>
        </authorList>
    </citation>
    <scope>RNA EDITING OF POSITIONS 2; 5 AND 15</scope>
</reference>
<evidence type="ECO:0000250" key="1">
    <source>
        <dbReference type="UniProtKB" id="P62952"/>
    </source>
</evidence>
<evidence type="ECO:0000255" key="2"/>
<evidence type="ECO:0000269" key="3">
    <source>
    </source>
</evidence>
<evidence type="ECO:0000303" key="4">
    <source>
    </source>
</evidence>
<evidence type="ECO:0000305" key="5"/>
<proteinExistence type="evidence at transcript level"/>
<feature type="chain" id="PRO_0000064851" description="Apoptosis inducing factor BLCAP">
    <location>
        <begin position="1"/>
        <end position="87"/>
    </location>
</feature>
<feature type="transmembrane region" description="Helical" evidence="2">
    <location>
        <begin position="19"/>
        <end position="39"/>
    </location>
</feature>
<feature type="transmembrane region" description="Helical" evidence="2">
    <location>
        <begin position="43"/>
        <end position="63"/>
    </location>
</feature>
<feature type="sequence variant" description="In RNA edited version." evidence="3">
    <original>Y</original>
    <variation>C</variation>
    <location>
        <position position="2"/>
    </location>
</feature>
<feature type="sequence variant" description="In RNA edited version." evidence="3">
    <original>Q</original>
    <variation>R</variation>
    <location>
        <position position="5"/>
    </location>
</feature>
<feature type="sequence variant" description="In RNA edited version." evidence="3">
    <original>K</original>
    <variation>R</variation>
    <location>
        <position position="15"/>
    </location>
</feature>
<feature type="sequence conflict" description="In Ref. 3; BAE41728." evidence="5" ref="3">
    <original>T</original>
    <variation>N</variation>
    <location>
        <position position="87"/>
    </location>
</feature>
<gene>
    <name type="primary">Blcap</name>
    <name type="synonym">Bc10</name>
</gene>
<comment type="function">
    <text evidence="1">Acts as a tumor suppressor; induces growth arrest at G(1)/S checkpoint and apoptosis via RB1-dependent and p53/TP53- and NF-kappa-B-independent mechanisms. Modulates expression of genes involved in the regulation of proliferation, cell cycle and apoptosis.</text>
</comment>
<comment type="subunit">
    <text evidence="1">Interacts with RB1 (phosphorylated and unphosphorylated) (By similarity). Interacts with STAT3; the interaction is promoted by cell stimulation with IL6 and phosphorylation of STAT3 (By similarity).</text>
</comment>
<comment type="subcellular location">
    <subcellularLocation>
        <location evidence="1">Cytoplasm</location>
    </subcellularLocation>
    <subcellularLocation>
        <location evidence="1">Nucleus</location>
    </subcellularLocation>
    <subcellularLocation>
        <location evidence="2">Membrane</location>
        <topology evidence="2">Multi-pass membrane protein</topology>
    </subcellularLocation>
</comment>
<comment type="RNA editing">
    <location>
        <position position="2" evidence="3"/>
    </location>
    <location>
        <position position="5" evidence="3"/>
    </location>
    <location>
        <position position="15" evidence="3"/>
    </location>
    <text evidence="3">Partially edited.</text>
</comment>
<comment type="similarity">
    <text evidence="5">Belongs to the BLCAP family.</text>
</comment>
<name>BLCAP_MOUSE</name>
<accession>P62951</accession>
<accession>A2AFZ4</accession>
<accession>O60629</accession>
<accession>Q3TD76</accession>
<accession>Q5XJG3</accession>
<accession>Q9D3B5</accession>